<keyword id="KW-0325">Glycoprotein</keyword>
<keyword id="KW-0326">Glycosidase</keyword>
<keyword id="KW-0378">Hydrolase</keyword>
<keyword id="KW-0732">Signal</keyword>
<comment type="similarity">
    <text evidence="5">Belongs to the glycosyl hydrolase 32 family.</text>
</comment>
<comment type="caution">
    <text evidence="3">EcdB, ecdC, ecdD, ecdE and ecdF have previously been identified as being part of the echinocandin B biosynthetic cluster, but it was later realized that this was due to a genome misassembly and these 5 proteins are now considered as artifacts and not part of the cluster.</text>
</comment>
<name>ECDF_ASPRU</name>
<organism>
    <name type="scientific">Aspergillus rugulosus</name>
    <name type="common">Emericella rugulosa</name>
    <dbReference type="NCBI Taxonomy" id="41736"/>
    <lineage>
        <taxon>Eukaryota</taxon>
        <taxon>Fungi</taxon>
        <taxon>Dikarya</taxon>
        <taxon>Ascomycota</taxon>
        <taxon>Pezizomycotina</taxon>
        <taxon>Eurotiomycetes</taxon>
        <taxon>Eurotiomycetidae</taxon>
        <taxon>Eurotiales</taxon>
        <taxon>Aspergillaceae</taxon>
        <taxon>Aspergillus</taxon>
        <taxon>Aspergillus subgen. Nidulantes</taxon>
    </lineage>
</organism>
<proteinExistence type="inferred from homology"/>
<gene>
    <name evidence="4" type="primary">ecdF</name>
</gene>
<accession>K0E681</accession>
<sequence>MFLHILCLLAGQALADDYRPVFHFVPEKNWMNEPNGLIKIGSTWHLFYQHNPTANVWGNLNWGHATSSDLVHWTHEPLAITSENGIEAFTGTSYYDAENTSGLGTSDNPPYLAWYTGYFPSNGTQDQRLAFSIDAGETWTKFEGNPVISAAQEAPHDATGGLETRDPKVFFHADSGKWIMVLAHGGQNKMSFWTSVDAKRWSWASDLTSTQVPGLPSAVKGWEVPDMFEVPVHGTDKTTWVLIFTPAEGSPAGGNGVLALTGSFDGTVFHPNPVNVSTLWLDYGRDFDGALSWENLPDSDGHRILAAISNSYGANPPTNTWKGMLSFPRTLSLHQSQTGQYFLQQPVSNLDTVSTPLVSVKNQTIAPGQVLLSSVRGTALDIRIAFSANAGTVLSLAVRKAGSQETVIQYRQSDATLSVDRTTSGLTSYDPAAGGVHTAPLRPDASGVVQIRALVDTCSVEVFGGQGEVVISDLIFPDETSDGLALQVIGGTAVLRSLEKFPRLGAVL</sequence>
<reference key="1">
    <citation type="journal article" date="2012" name="J. Am. Chem. Soc.">
        <title>Identification and characterization of the echinocandin B biosynthetic gene cluster from Emericella rugulosa NRRL 11440.</title>
        <authorList>
            <person name="Cacho R.A."/>
            <person name="Jiang W."/>
            <person name="Chooi Y.H."/>
            <person name="Walsh C.T."/>
            <person name="Tang Y."/>
        </authorList>
    </citation>
    <scope>NUCLEOTIDE SEQUENCE [GENOMIC DNA]</scope>
    <source>
        <strain>ATCC 58397 / NRRL 11440</strain>
    </source>
</reference>
<reference key="2">
    <citation type="journal article" date="2016" name="BMC Genomics">
        <title>Echinocandin B biosynthesis: a biosynthetic cluster from Aspergillus nidulans NRRL 8112 and reassembly of the subclusters Ecd and Hty from Aspergillus pachycristatus NRRL 11440 reveals a single coherent gene cluster.</title>
        <authorList>
            <person name="Huettel W."/>
            <person name="Youssar L."/>
            <person name="Gruening B.A."/>
            <person name="Guenther S."/>
            <person name="Hugentobler K.G."/>
        </authorList>
    </citation>
    <scope>CLUSTER REVISION</scope>
</reference>
<protein>
    <recommendedName>
        <fullName evidence="4">Putative glycosyl hydrolase ecdF</fullName>
        <ecNumber evidence="6">3.2.1.-</ecNumber>
    </recommendedName>
</protein>
<evidence type="ECO:0000255" key="1"/>
<evidence type="ECO:0000255" key="2">
    <source>
        <dbReference type="PROSITE-ProRule" id="PRU00498"/>
    </source>
</evidence>
<evidence type="ECO:0000269" key="3">
    <source>
    </source>
</evidence>
<evidence type="ECO:0000303" key="4">
    <source>
    </source>
</evidence>
<evidence type="ECO:0000305" key="5"/>
<evidence type="ECO:0000305" key="6">
    <source>
    </source>
</evidence>
<dbReference type="EC" id="3.2.1.-" evidence="6"/>
<dbReference type="EMBL" id="JX421684">
    <property type="protein sequence ID" value="AFT91384.1"/>
    <property type="molecule type" value="Genomic_DNA"/>
</dbReference>
<dbReference type="SMR" id="K0E681"/>
<dbReference type="GlyCosmos" id="K0E681">
    <property type="glycosylation" value="4 sites, No reported glycans"/>
</dbReference>
<dbReference type="GO" id="GO:0005737">
    <property type="term" value="C:cytoplasm"/>
    <property type="evidence" value="ECO:0007669"/>
    <property type="project" value="TreeGrafter"/>
</dbReference>
<dbReference type="GO" id="GO:0004575">
    <property type="term" value="F:sucrose alpha-glucosidase activity"/>
    <property type="evidence" value="ECO:0007669"/>
    <property type="project" value="TreeGrafter"/>
</dbReference>
<dbReference type="GO" id="GO:0005987">
    <property type="term" value="P:sucrose catabolic process"/>
    <property type="evidence" value="ECO:0007669"/>
    <property type="project" value="TreeGrafter"/>
</dbReference>
<dbReference type="CDD" id="cd18622">
    <property type="entry name" value="GH32_Inu-like"/>
    <property type="match status" value="1"/>
</dbReference>
<dbReference type="FunFam" id="2.60.120.560:FF:000003">
    <property type="entry name" value="Extracellular exo-inulinase inuE"/>
    <property type="match status" value="1"/>
</dbReference>
<dbReference type="Gene3D" id="2.60.120.560">
    <property type="entry name" value="Exo-inulinase, domain 1"/>
    <property type="match status" value="1"/>
</dbReference>
<dbReference type="Gene3D" id="2.115.10.20">
    <property type="entry name" value="Glycosyl hydrolase domain, family 43"/>
    <property type="match status" value="1"/>
</dbReference>
<dbReference type="InterPro" id="IPR013320">
    <property type="entry name" value="ConA-like_dom_sf"/>
</dbReference>
<dbReference type="InterPro" id="IPR001362">
    <property type="entry name" value="Glyco_hydro_32"/>
</dbReference>
<dbReference type="InterPro" id="IPR013189">
    <property type="entry name" value="Glyco_hydro_32_C"/>
</dbReference>
<dbReference type="InterPro" id="IPR013148">
    <property type="entry name" value="Glyco_hydro_32_N"/>
</dbReference>
<dbReference type="InterPro" id="IPR023296">
    <property type="entry name" value="Glyco_hydro_beta-prop_sf"/>
</dbReference>
<dbReference type="PANTHER" id="PTHR42800">
    <property type="entry name" value="EXOINULINASE INUD (AFU_ORTHOLOGUE AFUA_5G00480)"/>
    <property type="match status" value="1"/>
</dbReference>
<dbReference type="PANTHER" id="PTHR42800:SF1">
    <property type="entry name" value="EXOINULINASE INUD (AFU_ORTHOLOGUE AFUA_5G00480)"/>
    <property type="match status" value="1"/>
</dbReference>
<dbReference type="Pfam" id="PF08244">
    <property type="entry name" value="Glyco_hydro_32C"/>
    <property type="match status" value="1"/>
</dbReference>
<dbReference type="Pfam" id="PF00251">
    <property type="entry name" value="Glyco_hydro_32N"/>
    <property type="match status" value="1"/>
</dbReference>
<dbReference type="SMART" id="SM00640">
    <property type="entry name" value="Glyco_32"/>
    <property type="match status" value="1"/>
</dbReference>
<dbReference type="SUPFAM" id="SSF75005">
    <property type="entry name" value="Arabinanase/levansucrase/invertase"/>
    <property type="match status" value="1"/>
</dbReference>
<dbReference type="SUPFAM" id="SSF49899">
    <property type="entry name" value="Concanavalin A-like lectins/glucanases"/>
    <property type="match status" value="1"/>
</dbReference>
<feature type="signal peptide" evidence="1">
    <location>
        <begin position="1"/>
        <end position="15"/>
    </location>
</feature>
<feature type="chain" id="PRO_5013130535" description="Putative glycosyl hydrolase ecdF" evidence="1">
    <location>
        <begin position="16"/>
        <end position="508"/>
    </location>
</feature>
<feature type="glycosylation site" description="N-linked (GlcNAc...) asparagine" evidence="2">
    <location>
        <position position="99"/>
    </location>
</feature>
<feature type="glycosylation site" description="N-linked (GlcNAc...) asparagine" evidence="2">
    <location>
        <position position="122"/>
    </location>
</feature>
<feature type="glycosylation site" description="N-linked (GlcNAc...) asparagine" evidence="2">
    <location>
        <position position="275"/>
    </location>
</feature>
<feature type="glycosylation site" description="N-linked (GlcNAc...) asparagine" evidence="2">
    <location>
        <position position="362"/>
    </location>
</feature>